<gene>
    <name evidence="1" type="primary">rutE</name>
    <name type="ordered locus">KPN78578_10080</name>
    <name type="ORF">KPN_01034</name>
</gene>
<evidence type="ECO:0000255" key="1">
    <source>
        <dbReference type="HAMAP-Rule" id="MF_01204"/>
    </source>
</evidence>
<keyword id="KW-0285">Flavoprotein</keyword>
<keyword id="KW-0288">FMN</keyword>
<keyword id="KW-0520">NAD</keyword>
<keyword id="KW-0521">NADP</keyword>
<keyword id="KW-0560">Oxidoreductase</keyword>
<proteinExistence type="inferred from homology"/>
<reference key="1">
    <citation type="submission" date="2006-09" db="EMBL/GenBank/DDBJ databases">
        <authorList>
            <consortium name="The Klebsiella pneumonia Genome Sequencing Project"/>
            <person name="McClelland M."/>
            <person name="Sanderson E.K."/>
            <person name="Spieth J."/>
            <person name="Clifton W.S."/>
            <person name="Latreille P."/>
            <person name="Sabo A."/>
            <person name="Pepin K."/>
            <person name="Bhonagiri V."/>
            <person name="Porwollik S."/>
            <person name="Ali J."/>
            <person name="Wilson R.K."/>
        </authorList>
    </citation>
    <scope>NUCLEOTIDE SEQUENCE [LARGE SCALE GENOMIC DNA]</scope>
    <source>
        <strain>ATCC 700721 / MGH 78578</strain>
    </source>
</reference>
<protein>
    <recommendedName>
        <fullName evidence="1">Probable malonic semialdehyde reductase RutE</fullName>
        <ecNumber evidence="1">1.1.1.298</ecNumber>
    </recommendedName>
</protein>
<name>RUTE_KLEP7</name>
<comment type="function">
    <text evidence="1">May reduce toxic product malonic semialdehyde to 3-hydroxypropionic acid, which is excreted.</text>
</comment>
<comment type="catalytic activity">
    <reaction evidence="1">
        <text>3-hydroxypropanoate + NADP(+) = 3-oxopropanoate + NADPH + H(+)</text>
        <dbReference type="Rhea" id="RHEA:26438"/>
        <dbReference type="ChEBI" id="CHEBI:15378"/>
        <dbReference type="ChEBI" id="CHEBI:16510"/>
        <dbReference type="ChEBI" id="CHEBI:33190"/>
        <dbReference type="ChEBI" id="CHEBI:57783"/>
        <dbReference type="ChEBI" id="CHEBI:58349"/>
        <dbReference type="EC" id="1.1.1.298"/>
    </reaction>
</comment>
<comment type="cofactor">
    <cofactor evidence="1">
        <name>FMN</name>
        <dbReference type="ChEBI" id="CHEBI:58210"/>
    </cofactor>
</comment>
<comment type="similarity">
    <text evidence="1">Belongs to the nitroreductase family. HadB/RutE subfamily.</text>
</comment>
<organism>
    <name type="scientific">Klebsiella pneumoniae subsp. pneumoniae (strain ATCC 700721 / MGH 78578)</name>
    <dbReference type="NCBI Taxonomy" id="272620"/>
    <lineage>
        <taxon>Bacteria</taxon>
        <taxon>Pseudomonadati</taxon>
        <taxon>Pseudomonadota</taxon>
        <taxon>Gammaproteobacteria</taxon>
        <taxon>Enterobacterales</taxon>
        <taxon>Enterobacteriaceae</taxon>
        <taxon>Klebsiella/Raoultella group</taxon>
        <taxon>Klebsiella</taxon>
        <taxon>Klebsiella pneumoniae complex</taxon>
    </lineage>
</organism>
<sequence length="196" mass="21581">MNDAINHTACETLFTQARTHNGWLDKPVSDAQLQAVWDLMKMGPTSANCSPARIVFVRSAEGKEKLRPTLSSGNLQKTMQAPVTAIVAWDSAFYDRLPTLFPHGDARSWFTSSPQLAEETAFRNSSLQAAYLIFACRARGLDTGPMSGFDREKVDAAFFADNGWKSNLLVNIGYGDPGKLYGRLPRLSFDEACLLA</sequence>
<dbReference type="EC" id="1.1.1.298" evidence="1"/>
<dbReference type="EMBL" id="CP000647">
    <property type="protein sequence ID" value="ABR76469.1"/>
    <property type="molecule type" value="Genomic_DNA"/>
</dbReference>
<dbReference type="RefSeq" id="WP_004141442.1">
    <property type="nucleotide sequence ID" value="NC_009648.1"/>
</dbReference>
<dbReference type="SMR" id="A6T798"/>
<dbReference type="STRING" id="272620.KPN_01034"/>
<dbReference type="PaxDb" id="272620-KPN_01034"/>
<dbReference type="DNASU" id="5339076"/>
<dbReference type="EnsemblBacteria" id="ABR76469">
    <property type="protein sequence ID" value="ABR76469"/>
    <property type="gene ID" value="KPN_01034"/>
</dbReference>
<dbReference type="KEGG" id="kpn:KPN_01034"/>
<dbReference type="HOGENOM" id="CLU_084441_0_0_6"/>
<dbReference type="Proteomes" id="UP000000265">
    <property type="component" value="Chromosome"/>
</dbReference>
<dbReference type="GO" id="GO:0035527">
    <property type="term" value="F:3-hydroxypropionate dehydrogenase (NADP+) activity"/>
    <property type="evidence" value="ECO:0007669"/>
    <property type="project" value="UniProtKB-UniRule"/>
</dbReference>
<dbReference type="GO" id="GO:0019740">
    <property type="term" value="P:nitrogen utilization"/>
    <property type="evidence" value="ECO:0007669"/>
    <property type="project" value="UniProtKB-UniRule"/>
</dbReference>
<dbReference type="GO" id="GO:0006212">
    <property type="term" value="P:uracil catabolic process"/>
    <property type="evidence" value="ECO:0007669"/>
    <property type="project" value="UniProtKB-UniRule"/>
</dbReference>
<dbReference type="CDD" id="cd02148">
    <property type="entry name" value="RutE-like"/>
    <property type="match status" value="1"/>
</dbReference>
<dbReference type="Gene3D" id="3.40.109.10">
    <property type="entry name" value="NADH Oxidase"/>
    <property type="match status" value="1"/>
</dbReference>
<dbReference type="HAMAP" id="MF_01204">
    <property type="entry name" value="Oxidoreductase_RutE_HadB"/>
    <property type="match status" value="1"/>
</dbReference>
<dbReference type="InterPro" id="IPR029479">
    <property type="entry name" value="Nitroreductase"/>
</dbReference>
<dbReference type="InterPro" id="IPR000415">
    <property type="entry name" value="Nitroreductase-like"/>
</dbReference>
<dbReference type="InterPro" id="IPR050461">
    <property type="entry name" value="Nitroreductase_HadB/RutE"/>
</dbReference>
<dbReference type="InterPro" id="IPR023936">
    <property type="entry name" value="RutE-like"/>
</dbReference>
<dbReference type="NCBIfam" id="NF003768">
    <property type="entry name" value="PRK05365.1"/>
    <property type="match status" value="1"/>
</dbReference>
<dbReference type="PANTHER" id="PTHR43543">
    <property type="entry name" value="MALONIC SEMIALDEHYDE REDUCTASE RUTE-RELATED"/>
    <property type="match status" value="1"/>
</dbReference>
<dbReference type="PANTHER" id="PTHR43543:SF1">
    <property type="entry name" value="MALONIC SEMIALDEHYDE REDUCTASE RUTE-RELATED"/>
    <property type="match status" value="1"/>
</dbReference>
<dbReference type="Pfam" id="PF00881">
    <property type="entry name" value="Nitroreductase"/>
    <property type="match status" value="1"/>
</dbReference>
<dbReference type="SUPFAM" id="SSF55469">
    <property type="entry name" value="FMN-dependent nitroreductase-like"/>
    <property type="match status" value="1"/>
</dbReference>
<feature type="chain" id="PRO_1000066142" description="Probable malonic semialdehyde reductase RutE">
    <location>
        <begin position="1"/>
        <end position="196"/>
    </location>
</feature>
<accession>A6T798</accession>